<dbReference type="EMBL" id="X56290">
    <property type="protein sequence ID" value="CAA39737.1"/>
    <property type="molecule type" value="Genomic_DNA"/>
</dbReference>
<dbReference type="EMBL" id="AJ000022">
    <property type="protein sequence ID" value="CAA03861.1"/>
    <property type="molecule type" value="Genomic_DNA"/>
</dbReference>
<dbReference type="PIR" id="S17409">
    <property type="entry name" value="S17409"/>
</dbReference>
<dbReference type="SMR" id="P24955"/>
<dbReference type="GO" id="GO:0005743">
    <property type="term" value="C:mitochondrial inner membrane"/>
    <property type="evidence" value="ECO:0007669"/>
    <property type="project" value="UniProtKB-SubCell"/>
</dbReference>
<dbReference type="GO" id="GO:0045275">
    <property type="term" value="C:respiratory chain complex III"/>
    <property type="evidence" value="ECO:0007669"/>
    <property type="project" value="InterPro"/>
</dbReference>
<dbReference type="GO" id="GO:0046872">
    <property type="term" value="F:metal ion binding"/>
    <property type="evidence" value="ECO:0007669"/>
    <property type="project" value="UniProtKB-KW"/>
</dbReference>
<dbReference type="GO" id="GO:0008121">
    <property type="term" value="F:ubiquinol-cytochrome-c reductase activity"/>
    <property type="evidence" value="ECO:0007669"/>
    <property type="project" value="InterPro"/>
</dbReference>
<dbReference type="GO" id="GO:0006122">
    <property type="term" value="P:mitochondrial electron transport, ubiquinol to cytochrome c"/>
    <property type="evidence" value="ECO:0007669"/>
    <property type="project" value="TreeGrafter"/>
</dbReference>
<dbReference type="CDD" id="cd00290">
    <property type="entry name" value="cytochrome_b_C"/>
    <property type="match status" value="1"/>
</dbReference>
<dbReference type="CDD" id="cd00284">
    <property type="entry name" value="Cytochrome_b_N"/>
    <property type="match status" value="1"/>
</dbReference>
<dbReference type="FunFam" id="1.20.810.10:FF:000002">
    <property type="entry name" value="Cytochrome b"/>
    <property type="match status" value="1"/>
</dbReference>
<dbReference type="Gene3D" id="1.20.810.10">
    <property type="entry name" value="Cytochrome Bc1 Complex, Chain C"/>
    <property type="match status" value="1"/>
</dbReference>
<dbReference type="InterPro" id="IPR005798">
    <property type="entry name" value="Cyt_b/b6_C"/>
</dbReference>
<dbReference type="InterPro" id="IPR036150">
    <property type="entry name" value="Cyt_b/b6_C_sf"/>
</dbReference>
<dbReference type="InterPro" id="IPR005797">
    <property type="entry name" value="Cyt_b/b6_N"/>
</dbReference>
<dbReference type="InterPro" id="IPR027387">
    <property type="entry name" value="Cytb/b6-like_sf"/>
</dbReference>
<dbReference type="InterPro" id="IPR030689">
    <property type="entry name" value="Cytochrome_b"/>
</dbReference>
<dbReference type="InterPro" id="IPR048260">
    <property type="entry name" value="Cytochrome_b_C_euk/bac"/>
</dbReference>
<dbReference type="InterPro" id="IPR048259">
    <property type="entry name" value="Cytochrome_b_N_euk/bac"/>
</dbReference>
<dbReference type="InterPro" id="IPR016174">
    <property type="entry name" value="Di-haem_cyt_TM"/>
</dbReference>
<dbReference type="PANTHER" id="PTHR19271">
    <property type="entry name" value="CYTOCHROME B"/>
    <property type="match status" value="1"/>
</dbReference>
<dbReference type="PANTHER" id="PTHR19271:SF16">
    <property type="entry name" value="CYTOCHROME B"/>
    <property type="match status" value="1"/>
</dbReference>
<dbReference type="Pfam" id="PF00032">
    <property type="entry name" value="Cytochrom_B_C"/>
    <property type="match status" value="1"/>
</dbReference>
<dbReference type="Pfam" id="PF00033">
    <property type="entry name" value="Cytochrome_B"/>
    <property type="match status" value="1"/>
</dbReference>
<dbReference type="PIRSF" id="PIRSF038885">
    <property type="entry name" value="COB"/>
    <property type="match status" value="1"/>
</dbReference>
<dbReference type="SUPFAM" id="SSF81648">
    <property type="entry name" value="a domain/subunit of cytochrome bc1 complex (Ubiquinol-cytochrome c reductase)"/>
    <property type="match status" value="1"/>
</dbReference>
<dbReference type="SUPFAM" id="SSF81342">
    <property type="entry name" value="Transmembrane di-heme cytochromes"/>
    <property type="match status" value="1"/>
</dbReference>
<dbReference type="PROSITE" id="PS51003">
    <property type="entry name" value="CYTB_CTER"/>
    <property type="match status" value="1"/>
</dbReference>
<dbReference type="PROSITE" id="PS51002">
    <property type="entry name" value="CYTB_NTER"/>
    <property type="match status" value="1"/>
</dbReference>
<feature type="chain" id="PRO_0000060856" description="Cytochrome b">
    <location>
        <begin position="1"/>
        <end position="379"/>
    </location>
</feature>
<feature type="transmembrane region" description="Helical" evidence="2">
    <location>
        <begin position="33"/>
        <end position="53"/>
    </location>
</feature>
<feature type="transmembrane region" description="Helical" evidence="2">
    <location>
        <begin position="77"/>
        <end position="98"/>
    </location>
</feature>
<feature type="transmembrane region" description="Helical" evidence="2">
    <location>
        <begin position="113"/>
        <end position="133"/>
    </location>
</feature>
<feature type="transmembrane region" description="Helical" evidence="2">
    <location>
        <begin position="178"/>
        <end position="198"/>
    </location>
</feature>
<feature type="transmembrane region" description="Helical" evidence="2">
    <location>
        <begin position="226"/>
        <end position="246"/>
    </location>
</feature>
<feature type="transmembrane region" description="Helical" evidence="2">
    <location>
        <begin position="288"/>
        <end position="308"/>
    </location>
</feature>
<feature type="transmembrane region" description="Helical" evidence="2">
    <location>
        <begin position="320"/>
        <end position="340"/>
    </location>
</feature>
<feature type="transmembrane region" description="Helical" evidence="2">
    <location>
        <begin position="347"/>
        <end position="367"/>
    </location>
</feature>
<feature type="binding site" description="axial binding residue" evidence="2">
    <location>
        <position position="83"/>
    </location>
    <ligand>
        <name>heme b</name>
        <dbReference type="ChEBI" id="CHEBI:60344"/>
        <label>b562</label>
    </ligand>
    <ligandPart>
        <name>Fe</name>
        <dbReference type="ChEBI" id="CHEBI:18248"/>
    </ligandPart>
</feature>
<feature type="binding site" description="axial binding residue" evidence="2">
    <location>
        <position position="97"/>
    </location>
    <ligand>
        <name>heme b</name>
        <dbReference type="ChEBI" id="CHEBI:60344"/>
        <label>b566</label>
    </ligand>
    <ligandPart>
        <name>Fe</name>
        <dbReference type="ChEBI" id="CHEBI:18248"/>
    </ligandPart>
</feature>
<feature type="binding site" description="axial binding residue" evidence="2">
    <location>
        <position position="182"/>
    </location>
    <ligand>
        <name>heme b</name>
        <dbReference type="ChEBI" id="CHEBI:60344"/>
        <label>b562</label>
    </ligand>
    <ligandPart>
        <name>Fe</name>
        <dbReference type="ChEBI" id="CHEBI:18248"/>
    </ligandPart>
</feature>
<feature type="binding site" description="axial binding residue" evidence="2">
    <location>
        <position position="196"/>
    </location>
    <ligand>
        <name>heme b</name>
        <dbReference type="ChEBI" id="CHEBI:60344"/>
        <label>b566</label>
    </ligand>
    <ligandPart>
        <name>Fe</name>
        <dbReference type="ChEBI" id="CHEBI:18248"/>
    </ligandPart>
</feature>
<feature type="binding site" evidence="2">
    <location>
        <position position="201"/>
    </location>
    <ligand>
        <name>a ubiquinone</name>
        <dbReference type="ChEBI" id="CHEBI:16389"/>
    </ligand>
</feature>
<feature type="sequence conflict" description="In Ref. 1; CAA39737." evidence="5" ref="1">
    <original>T</original>
    <variation>S</variation>
    <location>
        <position position="7"/>
    </location>
</feature>
<feature type="sequence conflict" description="In Ref. 1; CAA39737." evidence="5" ref="1">
    <original>I</original>
    <variation>M</variation>
    <location>
        <position position="96"/>
    </location>
</feature>
<feature type="sequence conflict" description="In Ref. 1; CAA39737." evidence="5" ref="1">
    <original>T</original>
    <variation>M</variation>
    <location>
        <position position="108"/>
    </location>
</feature>
<feature type="sequence conflict" description="In Ref. 1; CAA39737." evidence="5" ref="1">
    <original>V</original>
    <variation>M</variation>
    <location>
        <position position="129"/>
    </location>
</feature>
<feature type="sequence conflict" description="In Ref. 1; CAA39737." evidence="5" ref="1">
    <original>V</original>
    <variation>A</variation>
    <location>
        <position position="215"/>
    </location>
</feature>
<feature type="sequence conflict" description="In Ref. 1; CAA39737." evidence="5" ref="1">
    <original>ILFLFLFLMT</original>
    <variation>ALLMILVLMM</variation>
    <location>
        <begin position="232"/>
        <end position="241"/>
    </location>
</feature>
<feature type="sequence conflict" description="In Ref. 1; CAA39737." evidence="5" ref="1">
    <original>A</original>
    <variation>S</variation>
    <location>
        <position position="246"/>
    </location>
</feature>
<feature type="sequence conflict" description="In Ref. 1; CAA39737." evidence="5" ref="1">
    <original>L</original>
    <variation>V</variation>
    <location>
        <position position="249"/>
    </location>
</feature>
<feature type="sequence conflict" description="In Ref. 1; CAA39737." evidence="5" ref="1">
    <original>K</original>
    <variation>N</variation>
    <location>
        <position position="255"/>
    </location>
</feature>
<feature type="sequence conflict" description="In Ref. 1; CAA39737." evidence="5" ref="1">
    <original>H</original>
    <variation>L</variation>
    <location>
        <position position="267"/>
    </location>
</feature>
<feature type="sequence conflict" description="In Ref. 1; CAA39737." evidence="5" ref="1">
    <original>S</original>
    <variation>L</variation>
    <location>
        <position position="296"/>
    </location>
</feature>
<feature type="sequence conflict" description="In Ref. 1; CAA39737." evidence="5" ref="1">
    <original>L</original>
    <variation>F</variation>
    <location>
        <position position="303"/>
    </location>
</feature>
<feature type="sequence conflict" description="In Ref. 1; CAA39737." evidence="5" ref="1">
    <original>F</original>
    <variation>L</variation>
    <location>
        <position position="306"/>
    </location>
</feature>
<feature type="sequence conflict" description="In Ref. 1; CAA39737." evidence="5" ref="1">
    <original>V</original>
    <variation>I</variation>
    <location>
        <position position="327"/>
    </location>
</feature>
<feature type="sequence conflict" description="In Ref. 1; CAA39737." evidence="5" ref="1">
    <original>Y</original>
    <variation>H</variation>
    <location>
        <position position="345"/>
    </location>
</feature>
<feature type="sequence conflict" description="In Ref. 1; CAA39737." evidence="5" ref="1">
    <original>T</original>
    <variation>I</variation>
    <location>
        <position position="349"/>
    </location>
</feature>
<feature type="sequence conflict" description="In Ref. 1; CAA39737." evidence="5" ref="1">
    <original>E</original>
    <variation>Q</variation>
    <location>
        <position position="373"/>
    </location>
</feature>
<organism>
    <name type="scientific">Dama dama</name>
    <name type="common">Fallow deer</name>
    <name type="synonym">Cervus dama</name>
    <dbReference type="NCBI Taxonomy" id="30532"/>
    <lineage>
        <taxon>Eukaryota</taxon>
        <taxon>Metazoa</taxon>
        <taxon>Chordata</taxon>
        <taxon>Craniata</taxon>
        <taxon>Vertebrata</taxon>
        <taxon>Euteleostomi</taxon>
        <taxon>Mammalia</taxon>
        <taxon>Eutheria</taxon>
        <taxon>Laurasiatheria</taxon>
        <taxon>Artiodactyla</taxon>
        <taxon>Ruminantia</taxon>
        <taxon>Pecora</taxon>
        <taxon>Cervidae</taxon>
        <taxon>Cervinae</taxon>
        <taxon>Dama</taxon>
    </lineage>
</organism>
<sequence>MINIRKTHPLMKIVNNAFIDLPAPSNISSWWNFGSLLGICLILQILTGLFLAMHYTSDTMTAFSSVTHICRDVNYGWIIRYMHANGASMFFICLFIHVGRGLYYGSYTFLETWNIGVILLFTVMATAFVGYVLPWGQMSFWGATVITNLLSAIPYIGTNLVEWIWGGFSVDKATLTRFFAFHFILPFIIAALAMVHLLFLHETGSNNPTGIPSDVDKIPFHPYYTIKDILGILFLFLFLMTLVLFAPDLLGDPDKYTPANPLNTPPHIKPEWYFLFAYAILRSIPNKLGGVLALVSSILILILMPFLHTSKQRSMMFRPFSQCLFWVLVADLLTLTWIGGQPVEYPFITIGQLASILYFLIILVLMPATSTIENNLLKW</sequence>
<protein>
    <recommendedName>
        <fullName>Cytochrome b</fullName>
    </recommendedName>
    <alternativeName>
        <fullName>Complex III subunit 3</fullName>
    </alternativeName>
    <alternativeName>
        <fullName>Complex III subunit III</fullName>
    </alternativeName>
    <alternativeName>
        <fullName>Cytochrome b-c1 complex subunit 3</fullName>
    </alternativeName>
    <alternativeName>
        <fullName>Ubiquinol-cytochrome-c reductase complex cytochrome b subunit</fullName>
    </alternativeName>
</protein>
<proteinExistence type="inferred from homology"/>
<name>CYB_DAMDA</name>
<reference key="1">
    <citation type="journal article" date="1991" name="J. Mol. Evol.">
        <title>Evolution of the cytochrome b gene of mammals.</title>
        <authorList>
            <person name="Irwin D.M."/>
            <person name="Kocher T.D."/>
            <person name="Wilson A.C."/>
        </authorList>
    </citation>
    <scope>NUCLEOTIDE SEQUENCE [GENOMIC DNA]</scope>
</reference>
<reference key="2">
    <citation type="journal article" date="1998" name="Proc. R. Soc. B">
        <title>New phylogenetic perspectives on the Cervidae (Artiodactyla) are provided by the mitochondrial cytochrome b gene.</title>
        <authorList>
            <person name="Randi E."/>
            <person name="Mucci N."/>
            <person name="Pierpaoli M."/>
            <person name="Douzery E.J.P."/>
        </authorList>
    </citation>
    <scope>NUCLEOTIDE SEQUENCE [GENOMIC DNA]</scope>
</reference>
<gene>
    <name type="primary">MT-CYB</name>
    <name type="synonym">COB</name>
    <name type="synonym">CYTB</name>
    <name type="synonym">MTCYB</name>
</gene>
<comment type="function">
    <text evidence="2">Component of the ubiquinol-cytochrome c reductase complex (complex III or cytochrome b-c1 complex) that is part of the mitochondrial respiratory chain. The b-c1 complex mediates electron transfer from ubiquinol to cytochrome c. Contributes to the generation of a proton gradient across the mitochondrial membrane that is then used for ATP synthesis.</text>
</comment>
<comment type="cofactor">
    <cofactor evidence="2">
        <name>heme b</name>
        <dbReference type="ChEBI" id="CHEBI:60344"/>
    </cofactor>
    <text evidence="2">Binds 2 heme b groups non-covalently.</text>
</comment>
<comment type="subunit">
    <text evidence="2">The cytochrome bc1 complex contains 11 subunits: 3 respiratory subunits (MT-CYB, CYC1 and UQCRFS1), 2 core proteins (UQCRC1 and UQCRC2) and 6 low-molecular weight proteins (UQCRH/QCR6, UQCRB/QCR7, UQCRQ/QCR8, UQCR10/QCR9, UQCR11/QCR10 and a cleavage product of UQCRFS1). This cytochrome bc1 complex then forms a dimer.</text>
</comment>
<comment type="subcellular location">
    <subcellularLocation>
        <location evidence="2">Mitochondrion inner membrane</location>
        <topology evidence="2">Multi-pass membrane protein</topology>
    </subcellularLocation>
</comment>
<comment type="miscellaneous">
    <text evidence="1">Heme 1 (or BL or b562) is low-potential and absorbs at about 562 nm, and heme 2 (or BH or b566) is high-potential and absorbs at about 566 nm.</text>
</comment>
<comment type="similarity">
    <text evidence="3 4">Belongs to the cytochrome b family.</text>
</comment>
<comment type="caution">
    <text evidence="2">The full-length protein contains only eight transmembrane helices, not nine as predicted by bioinformatics tools.</text>
</comment>
<geneLocation type="mitochondrion"/>
<keyword id="KW-0249">Electron transport</keyword>
<keyword id="KW-0349">Heme</keyword>
<keyword id="KW-0408">Iron</keyword>
<keyword id="KW-0472">Membrane</keyword>
<keyword id="KW-0479">Metal-binding</keyword>
<keyword id="KW-0496">Mitochondrion</keyword>
<keyword id="KW-0999">Mitochondrion inner membrane</keyword>
<keyword id="KW-0679">Respiratory chain</keyword>
<keyword id="KW-0812">Transmembrane</keyword>
<keyword id="KW-1133">Transmembrane helix</keyword>
<keyword id="KW-0813">Transport</keyword>
<keyword id="KW-0830">Ubiquinone</keyword>
<accession>P24955</accession>
<accession>O47937</accession>
<evidence type="ECO:0000250" key="1"/>
<evidence type="ECO:0000250" key="2">
    <source>
        <dbReference type="UniProtKB" id="P00157"/>
    </source>
</evidence>
<evidence type="ECO:0000255" key="3">
    <source>
        <dbReference type="PROSITE-ProRule" id="PRU00967"/>
    </source>
</evidence>
<evidence type="ECO:0000255" key="4">
    <source>
        <dbReference type="PROSITE-ProRule" id="PRU00968"/>
    </source>
</evidence>
<evidence type="ECO:0000305" key="5"/>